<protein>
    <recommendedName>
        <fullName evidence="1">ATP synthase subunit beta</fullName>
        <ecNumber evidence="1">7.1.2.2</ecNumber>
    </recommendedName>
    <alternativeName>
        <fullName evidence="1">ATP synthase F1 sector subunit beta</fullName>
    </alternativeName>
    <alternativeName>
        <fullName evidence="1">F-ATPase subunit beta</fullName>
    </alternativeName>
</protein>
<accession>A9BCC6</accession>
<feature type="chain" id="PRO_1000143531" description="ATP synthase subunit beta">
    <location>
        <begin position="1"/>
        <end position="488"/>
    </location>
</feature>
<feature type="binding site" evidence="1">
    <location>
        <begin position="164"/>
        <end position="171"/>
    </location>
    <ligand>
        <name>ATP</name>
        <dbReference type="ChEBI" id="CHEBI:30616"/>
    </ligand>
</feature>
<gene>
    <name evidence="1" type="primary">atpD</name>
    <name evidence="1" type="synonym">atpB</name>
    <name type="ordered locus">P9211_15571</name>
</gene>
<keyword id="KW-0066">ATP synthesis</keyword>
<keyword id="KW-0067">ATP-binding</keyword>
<keyword id="KW-0139">CF(1)</keyword>
<keyword id="KW-0375">Hydrogen ion transport</keyword>
<keyword id="KW-0406">Ion transport</keyword>
<keyword id="KW-0472">Membrane</keyword>
<keyword id="KW-0547">Nucleotide-binding</keyword>
<keyword id="KW-1185">Reference proteome</keyword>
<keyword id="KW-0793">Thylakoid</keyword>
<keyword id="KW-1278">Translocase</keyword>
<keyword id="KW-0813">Transport</keyword>
<comment type="function">
    <text evidence="1">Produces ATP from ADP in the presence of a proton gradient across the membrane. The catalytic sites are hosted primarily by the beta subunits.</text>
</comment>
<comment type="catalytic activity">
    <reaction evidence="1">
        <text>ATP + H2O + 4 H(+)(in) = ADP + phosphate + 5 H(+)(out)</text>
        <dbReference type="Rhea" id="RHEA:57720"/>
        <dbReference type="ChEBI" id="CHEBI:15377"/>
        <dbReference type="ChEBI" id="CHEBI:15378"/>
        <dbReference type="ChEBI" id="CHEBI:30616"/>
        <dbReference type="ChEBI" id="CHEBI:43474"/>
        <dbReference type="ChEBI" id="CHEBI:456216"/>
        <dbReference type="EC" id="7.1.2.2"/>
    </reaction>
</comment>
<comment type="subunit">
    <text evidence="1">F-type ATPases have 2 components, CF(1) - the catalytic core - and CF(0) - the membrane proton channel. CF(1) has five subunits: alpha(3), beta(3), gamma(1), delta(1), epsilon(1). CF(0) has four main subunits: a(1), b(1), b'(1) and c(9-12).</text>
</comment>
<comment type="subcellular location">
    <subcellularLocation>
        <location evidence="1">Cellular thylakoid membrane</location>
        <topology evidence="1">Peripheral membrane protein</topology>
    </subcellularLocation>
</comment>
<comment type="similarity">
    <text evidence="1">Belongs to the ATPase alpha/beta chains family.</text>
</comment>
<proteinExistence type="inferred from homology"/>
<evidence type="ECO:0000255" key="1">
    <source>
        <dbReference type="HAMAP-Rule" id="MF_01347"/>
    </source>
</evidence>
<name>ATPB_PROM4</name>
<organism>
    <name type="scientific">Prochlorococcus marinus (strain MIT 9211)</name>
    <dbReference type="NCBI Taxonomy" id="93059"/>
    <lineage>
        <taxon>Bacteria</taxon>
        <taxon>Bacillati</taxon>
        <taxon>Cyanobacteriota</taxon>
        <taxon>Cyanophyceae</taxon>
        <taxon>Synechococcales</taxon>
        <taxon>Prochlorococcaceae</taxon>
        <taxon>Prochlorococcus</taxon>
    </lineage>
</organism>
<reference key="1">
    <citation type="journal article" date="2007" name="PLoS Genet.">
        <title>Patterns and implications of gene gain and loss in the evolution of Prochlorococcus.</title>
        <authorList>
            <person name="Kettler G.C."/>
            <person name="Martiny A.C."/>
            <person name="Huang K."/>
            <person name="Zucker J."/>
            <person name="Coleman M.L."/>
            <person name="Rodrigue S."/>
            <person name="Chen F."/>
            <person name="Lapidus A."/>
            <person name="Ferriera S."/>
            <person name="Johnson J."/>
            <person name="Steglich C."/>
            <person name="Church G.M."/>
            <person name="Richardson P."/>
            <person name="Chisholm S.W."/>
        </authorList>
    </citation>
    <scope>NUCLEOTIDE SEQUENCE [LARGE SCALE GENOMIC DNA]</scope>
    <source>
        <strain>MIT 9211</strain>
    </source>
</reference>
<sequence length="488" mass="52275">MAPAATASTGTKGIVRQVIGPVLDVEFPAGKLPKILNALRIEGKNPAGQDIGLTAEVQQLLGDHRVRAVAMSGTDGLVRGMEAVDTGAPISVPVGEATLGRIFNVLGEPVDEQGPIKSSTTSPIHRSAPKLTDLETKPKVFETGIKVIDLLAPYRQGGKVGLFGGAGVGKTVLIQELINNIAKEHGGVSVFGGVGERTREGNDLYEEFKESGVINADNLTESKVALCFGQMNEPPGARMRVGLSALTMAEHFRDVNKQDVLLFIDNIFRFVQAGSEVSALLGRMPSAVGYQPTLGTDVGELQERITSTLEGSITSIQAVYVPADDLTDPAPATTFAHLDATTVLARALAAKGIYPAVDPLDSTSTMLQPAVVGDEHYRTARAVQSTLQRYKELQDIIAILGLDELSEEDRKTFDRARKIEKFLSQPFFVAEIFTGMSGKYVKLEETIAGFNMILSGELDNLPEQAFYLVGNIEEVKAKAQKINSENKG</sequence>
<dbReference type="EC" id="7.1.2.2" evidence="1"/>
<dbReference type="EMBL" id="CP000878">
    <property type="protein sequence ID" value="ABX09488.1"/>
    <property type="molecule type" value="Genomic_DNA"/>
</dbReference>
<dbReference type="RefSeq" id="WP_012196109.1">
    <property type="nucleotide sequence ID" value="NC_009976.1"/>
</dbReference>
<dbReference type="SMR" id="A9BCC6"/>
<dbReference type="STRING" id="93059.P9211_15571"/>
<dbReference type="KEGG" id="pmj:P9211_15571"/>
<dbReference type="eggNOG" id="COG0055">
    <property type="taxonomic scope" value="Bacteria"/>
</dbReference>
<dbReference type="HOGENOM" id="CLU_022398_0_2_3"/>
<dbReference type="OrthoDB" id="9801639at2"/>
<dbReference type="Proteomes" id="UP000000788">
    <property type="component" value="Chromosome"/>
</dbReference>
<dbReference type="GO" id="GO:0031676">
    <property type="term" value="C:plasma membrane-derived thylakoid membrane"/>
    <property type="evidence" value="ECO:0007669"/>
    <property type="project" value="UniProtKB-SubCell"/>
</dbReference>
<dbReference type="GO" id="GO:0045259">
    <property type="term" value="C:proton-transporting ATP synthase complex"/>
    <property type="evidence" value="ECO:0007669"/>
    <property type="project" value="UniProtKB-KW"/>
</dbReference>
<dbReference type="GO" id="GO:0005524">
    <property type="term" value="F:ATP binding"/>
    <property type="evidence" value="ECO:0007669"/>
    <property type="project" value="UniProtKB-UniRule"/>
</dbReference>
<dbReference type="GO" id="GO:0016887">
    <property type="term" value="F:ATP hydrolysis activity"/>
    <property type="evidence" value="ECO:0007669"/>
    <property type="project" value="InterPro"/>
</dbReference>
<dbReference type="GO" id="GO:0046933">
    <property type="term" value="F:proton-transporting ATP synthase activity, rotational mechanism"/>
    <property type="evidence" value="ECO:0007669"/>
    <property type="project" value="UniProtKB-UniRule"/>
</dbReference>
<dbReference type="CDD" id="cd18110">
    <property type="entry name" value="ATP-synt_F1_beta_C"/>
    <property type="match status" value="1"/>
</dbReference>
<dbReference type="CDD" id="cd18115">
    <property type="entry name" value="ATP-synt_F1_beta_N"/>
    <property type="match status" value="1"/>
</dbReference>
<dbReference type="CDD" id="cd01133">
    <property type="entry name" value="F1-ATPase_beta_CD"/>
    <property type="match status" value="1"/>
</dbReference>
<dbReference type="FunFam" id="1.10.1140.10:FF:000001">
    <property type="entry name" value="ATP synthase subunit beta"/>
    <property type="match status" value="1"/>
</dbReference>
<dbReference type="FunFam" id="3.40.50.12240:FF:000006">
    <property type="entry name" value="ATP synthase subunit beta"/>
    <property type="match status" value="1"/>
</dbReference>
<dbReference type="FunFam" id="3.40.50.300:FF:000004">
    <property type="entry name" value="ATP synthase subunit beta"/>
    <property type="match status" value="1"/>
</dbReference>
<dbReference type="FunFam" id="2.40.10.170:FF:000002">
    <property type="entry name" value="ATP synthase subunit beta, chloroplastic"/>
    <property type="match status" value="1"/>
</dbReference>
<dbReference type="Gene3D" id="2.40.10.170">
    <property type="match status" value="1"/>
</dbReference>
<dbReference type="Gene3D" id="1.10.1140.10">
    <property type="entry name" value="Bovine Mitochondrial F1-atpase, Atp Synthase Beta Chain, Chain D, domain 3"/>
    <property type="match status" value="1"/>
</dbReference>
<dbReference type="Gene3D" id="3.40.50.300">
    <property type="entry name" value="P-loop containing nucleotide triphosphate hydrolases"/>
    <property type="match status" value="1"/>
</dbReference>
<dbReference type="HAMAP" id="MF_01347">
    <property type="entry name" value="ATP_synth_beta_bact"/>
    <property type="match status" value="1"/>
</dbReference>
<dbReference type="InterPro" id="IPR003593">
    <property type="entry name" value="AAA+_ATPase"/>
</dbReference>
<dbReference type="InterPro" id="IPR055190">
    <property type="entry name" value="ATP-synt_VA_C"/>
</dbReference>
<dbReference type="InterPro" id="IPR005722">
    <property type="entry name" value="ATP_synth_F1_bsu"/>
</dbReference>
<dbReference type="InterPro" id="IPR020003">
    <property type="entry name" value="ATPase_a/bsu_AS"/>
</dbReference>
<dbReference type="InterPro" id="IPR050053">
    <property type="entry name" value="ATPase_alpha/beta_chains"/>
</dbReference>
<dbReference type="InterPro" id="IPR004100">
    <property type="entry name" value="ATPase_F1/V1/A1_a/bsu_N"/>
</dbReference>
<dbReference type="InterPro" id="IPR036121">
    <property type="entry name" value="ATPase_F1/V1/A1_a/bsu_N_sf"/>
</dbReference>
<dbReference type="InterPro" id="IPR000194">
    <property type="entry name" value="ATPase_F1/V1/A1_a/bsu_nucl-bd"/>
</dbReference>
<dbReference type="InterPro" id="IPR024034">
    <property type="entry name" value="ATPase_F1/V1_b/a_C"/>
</dbReference>
<dbReference type="InterPro" id="IPR027417">
    <property type="entry name" value="P-loop_NTPase"/>
</dbReference>
<dbReference type="NCBIfam" id="TIGR01039">
    <property type="entry name" value="atpD"/>
    <property type="match status" value="1"/>
</dbReference>
<dbReference type="PANTHER" id="PTHR15184">
    <property type="entry name" value="ATP SYNTHASE"/>
    <property type="match status" value="1"/>
</dbReference>
<dbReference type="PANTHER" id="PTHR15184:SF71">
    <property type="entry name" value="ATP SYNTHASE SUBUNIT BETA, MITOCHONDRIAL"/>
    <property type="match status" value="1"/>
</dbReference>
<dbReference type="Pfam" id="PF00006">
    <property type="entry name" value="ATP-synt_ab"/>
    <property type="match status" value="1"/>
</dbReference>
<dbReference type="Pfam" id="PF02874">
    <property type="entry name" value="ATP-synt_ab_N"/>
    <property type="match status" value="1"/>
</dbReference>
<dbReference type="Pfam" id="PF22919">
    <property type="entry name" value="ATP-synt_VA_C"/>
    <property type="match status" value="1"/>
</dbReference>
<dbReference type="SMART" id="SM00382">
    <property type="entry name" value="AAA"/>
    <property type="match status" value="1"/>
</dbReference>
<dbReference type="SUPFAM" id="SSF47917">
    <property type="entry name" value="C-terminal domain of alpha and beta subunits of F1 ATP synthase"/>
    <property type="match status" value="1"/>
</dbReference>
<dbReference type="SUPFAM" id="SSF50615">
    <property type="entry name" value="N-terminal domain of alpha and beta subunits of F1 ATP synthase"/>
    <property type="match status" value="1"/>
</dbReference>
<dbReference type="SUPFAM" id="SSF52540">
    <property type="entry name" value="P-loop containing nucleoside triphosphate hydrolases"/>
    <property type="match status" value="1"/>
</dbReference>
<dbReference type="PROSITE" id="PS00152">
    <property type="entry name" value="ATPASE_ALPHA_BETA"/>
    <property type="match status" value="1"/>
</dbReference>